<protein>
    <recommendedName>
        <fullName evidence="1">Adenine phosphoribosyltransferase</fullName>
        <shortName evidence="1">APRT</shortName>
        <ecNumber evidence="1">2.4.2.7</ecNumber>
    </recommendedName>
</protein>
<gene>
    <name evidence="1" type="primary">apt</name>
    <name type="ordered locus">GFO_0464</name>
</gene>
<accession>A0LYK2</accession>
<comment type="function">
    <text evidence="1">Catalyzes a salvage reaction resulting in the formation of AMP, that is energically less costly than de novo synthesis.</text>
</comment>
<comment type="catalytic activity">
    <reaction evidence="1">
        <text>AMP + diphosphate = 5-phospho-alpha-D-ribose 1-diphosphate + adenine</text>
        <dbReference type="Rhea" id="RHEA:16609"/>
        <dbReference type="ChEBI" id="CHEBI:16708"/>
        <dbReference type="ChEBI" id="CHEBI:33019"/>
        <dbReference type="ChEBI" id="CHEBI:58017"/>
        <dbReference type="ChEBI" id="CHEBI:456215"/>
        <dbReference type="EC" id="2.4.2.7"/>
    </reaction>
</comment>
<comment type="pathway">
    <text evidence="1">Purine metabolism; AMP biosynthesis via salvage pathway; AMP from adenine: step 1/1.</text>
</comment>
<comment type="subunit">
    <text evidence="1">Homodimer.</text>
</comment>
<comment type="subcellular location">
    <subcellularLocation>
        <location evidence="1">Cytoplasm</location>
    </subcellularLocation>
</comment>
<comment type="similarity">
    <text evidence="1">Belongs to the purine/pyrimidine phosphoribosyltransferase family.</text>
</comment>
<name>APT_CHRFK</name>
<feature type="chain" id="PRO_0000329347" description="Adenine phosphoribosyltransferase">
    <location>
        <begin position="1"/>
        <end position="171"/>
    </location>
</feature>
<proteinExistence type="inferred from homology"/>
<organism>
    <name type="scientific">Christiangramia forsetii (strain DSM 17595 / CGMCC 1.15422 / KT0803)</name>
    <name type="common">Gramella forsetii</name>
    <dbReference type="NCBI Taxonomy" id="411154"/>
    <lineage>
        <taxon>Bacteria</taxon>
        <taxon>Pseudomonadati</taxon>
        <taxon>Bacteroidota</taxon>
        <taxon>Flavobacteriia</taxon>
        <taxon>Flavobacteriales</taxon>
        <taxon>Flavobacteriaceae</taxon>
        <taxon>Christiangramia</taxon>
    </lineage>
</organism>
<evidence type="ECO:0000255" key="1">
    <source>
        <dbReference type="HAMAP-Rule" id="MF_00004"/>
    </source>
</evidence>
<keyword id="KW-0963">Cytoplasm</keyword>
<keyword id="KW-0328">Glycosyltransferase</keyword>
<keyword id="KW-0660">Purine salvage</keyword>
<keyword id="KW-0808">Transferase</keyword>
<dbReference type="EC" id="2.4.2.7" evidence="1"/>
<dbReference type="EMBL" id="CU207366">
    <property type="protein sequence ID" value="CAL65447.1"/>
    <property type="molecule type" value="Genomic_DNA"/>
</dbReference>
<dbReference type="RefSeq" id="WP_011708385.1">
    <property type="nucleotide sequence ID" value="NC_008571.1"/>
</dbReference>
<dbReference type="SMR" id="A0LYK2"/>
<dbReference type="STRING" id="411154.GFO_0464"/>
<dbReference type="KEGG" id="gfo:GFO_0464"/>
<dbReference type="eggNOG" id="COG0503">
    <property type="taxonomic scope" value="Bacteria"/>
</dbReference>
<dbReference type="HOGENOM" id="CLU_063339_3_0_10"/>
<dbReference type="OrthoDB" id="9803963at2"/>
<dbReference type="UniPathway" id="UPA00588">
    <property type="reaction ID" value="UER00646"/>
</dbReference>
<dbReference type="Proteomes" id="UP000000755">
    <property type="component" value="Chromosome"/>
</dbReference>
<dbReference type="GO" id="GO:0005737">
    <property type="term" value="C:cytoplasm"/>
    <property type="evidence" value="ECO:0007669"/>
    <property type="project" value="UniProtKB-SubCell"/>
</dbReference>
<dbReference type="GO" id="GO:0002055">
    <property type="term" value="F:adenine binding"/>
    <property type="evidence" value="ECO:0007669"/>
    <property type="project" value="TreeGrafter"/>
</dbReference>
<dbReference type="GO" id="GO:0003999">
    <property type="term" value="F:adenine phosphoribosyltransferase activity"/>
    <property type="evidence" value="ECO:0007669"/>
    <property type="project" value="UniProtKB-UniRule"/>
</dbReference>
<dbReference type="GO" id="GO:0016208">
    <property type="term" value="F:AMP binding"/>
    <property type="evidence" value="ECO:0007669"/>
    <property type="project" value="TreeGrafter"/>
</dbReference>
<dbReference type="GO" id="GO:0006168">
    <property type="term" value="P:adenine salvage"/>
    <property type="evidence" value="ECO:0007669"/>
    <property type="project" value="InterPro"/>
</dbReference>
<dbReference type="GO" id="GO:0044209">
    <property type="term" value="P:AMP salvage"/>
    <property type="evidence" value="ECO:0007669"/>
    <property type="project" value="UniProtKB-UniRule"/>
</dbReference>
<dbReference type="GO" id="GO:0006166">
    <property type="term" value="P:purine ribonucleoside salvage"/>
    <property type="evidence" value="ECO:0007669"/>
    <property type="project" value="UniProtKB-KW"/>
</dbReference>
<dbReference type="CDD" id="cd06223">
    <property type="entry name" value="PRTases_typeI"/>
    <property type="match status" value="1"/>
</dbReference>
<dbReference type="FunFam" id="3.40.50.2020:FF:000021">
    <property type="entry name" value="Adenine phosphoribosyltransferase"/>
    <property type="match status" value="1"/>
</dbReference>
<dbReference type="Gene3D" id="3.40.50.2020">
    <property type="match status" value="1"/>
</dbReference>
<dbReference type="HAMAP" id="MF_00004">
    <property type="entry name" value="Aden_phosphoribosyltr"/>
    <property type="match status" value="1"/>
</dbReference>
<dbReference type="InterPro" id="IPR005764">
    <property type="entry name" value="Ade_phspho_trans"/>
</dbReference>
<dbReference type="InterPro" id="IPR000836">
    <property type="entry name" value="PRibTrfase_dom"/>
</dbReference>
<dbReference type="InterPro" id="IPR029057">
    <property type="entry name" value="PRTase-like"/>
</dbReference>
<dbReference type="InterPro" id="IPR050054">
    <property type="entry name" value="UPRTase/APRTase"/>
</dbReference>
<dbReference type="NCBIfam" id="TIGR01090">
    <property type="entry name" value="apt"/>
    <property type="match status" value="1"/>
</dbReference>
<dbReference type="NCBIfam" id="NF002634">
    <property type="entry name" value="PRK02304.1-3"/>
    <property type="match status" value="1"/>
</dbReference>
<dbReference type="NCBIfam" id="NF002636">
    <property type="entry name" value="PRK02304.1-5"/>
    <property type="match status" value="1"/>
</dbReference>
<dbReference type="PANTHER" id="PTHR32315">
    <property type="entry name" value="ADENINE PHOSPHORIBOSYLTRANSFERASE"/>
    <property type="match status" value="1"/>
</dbReference>
<dbReference type="PANTHER" id="PTHR32315:SF3">
    <property type="entry name" value="ADENINE PHOSPHORIBOSYLTRANSFERASE"/>
    <property type="match status" value="1"/>
</dbReference>
<dbReference type="Pfam" id="PF00156">
    <property type="entry name" value="Pribosyltran"/>
    <property type="match status" value="1"/>
</dbReference>
<dbReference type="SUPFAM" id="SSF53271">
    <property type="entry name" value="PRTase-like"/>
    <property type="match status" value="1"/>
</dbReference>
<sequence>MELKSYVREIADFPKKGVSYKDITPLLLDPEAMRLAVKLFMKNLPHGKIDKVVGIESRGFFFATMLAEKLNAGFIPVRKPGKLPHRTHKENYDLEYGSDSLEIHEDAIKKGEKVLLHDDVLATGGTAAATCKLIEKCGGEIVQCNFLVELEFLKGVDKLKGYDVCSLIKYS</sequence>
<reference key="1">
    <citation type="journal article" date="2006" name="Environ. Microbiol.">
        <title>Whole genome analysis of the marine Bacteroidetes'Gramella forsetii' reveals adaptations to degradation of polymeric organic matter.</title>
        <authorList>
            <person name="Bauer M."/>
            <person name="Kube M."/>
            <person name="Teeling H."/>
            <person name="Richter M."/>
            <person name="Lombardot T."/>
            <person name="Allers E."/>
            <person name="Wuerdemann C.A."/>
            <person name="Quast C."/>
            <person name="Kuhl H."/>
            <person name="Knaust F."/>
            <person name="Woebken D."/>
            <person name="Bischof K."/>
            <person name="Mussmann M."/>
            <person name="Choudhuri J.V."/>
            <person name="Meyer F."/>
            <person name="Reinhardt R."/>
            <person name="Amann R.I."/>
            <person name="Gloeckner F.O."/>
        </authorList>
    </citation>
    <scope>NUCLEOTIDE SEQUENCE [LARGE SCALE GENOMIC DNA]</scope>
    <source>
        <strain>DSM 17595 / CGMCC 1.15422 / KT0803</strain>
    </source>
</reference>